<sequence>MSVIFSGIQPSGTITLGNYLGAMKQFTELQNEHDCYFCIVNQHAITVPQDPVQLRKNIRSLAALYVACGIDPEKATLFVQSEVPAHAQLGWIMQSVAYVGELERMTQYKDKASGRDSVPAGLLTYPPLMAADILLYNTEIVPVGDDQKQHMELTRDLAERFNKRFREVFTIPEIRIPKVGARVMSLTEPTKKMSKSDPNPKSMISMLDEPKTIEKKIKSAVTDSEGIVKFDKENKPGISNLLTIYSSFSGKTVEEIEAMYEGKGYGDFKGDLAQVVVEAIRPIQDKYNELINSPELDEILDKGAEKANRVAFKQLRKVENAMGLSRKRR</sequence>
<comment type="function">
    <text evidence="1">Catalyzes the attachment of tryptophan to tRNA(Trp).</text>
</comment>
<comment type="catalytic activity">
    <reaction evidence="1">
        <text>tRNA(Trp) + L-tryptophan + ATP = L-tryptophyl-tRNA(Trp) + AMP + diphosphate + H(+)</text>
        <dbReference type="Rhea" id="RHEA:24080"/>
        <dbReference type="Rhea" id="RHEA-COMP:9671"/>
        <dbReference type="Rhea" id="RHEA-COMP:9705"/>
        <dbReference type="ChEBI" id="CHEBI:15378"/>
        <dbReference type="ChEBI" id="CHEBI:30616"/>
        <dbReference type="ChEBI" id="CHEBI:33019"/>
        <dbReference type="ChEBI" id="CHEBI:57912"/>
        <dbReference type="ChEBI" id="CHEBI:78442"/>
        <dbReference type="ChEBI" id="CHEBI:78535"/>
        <dbReference type="ChEBI" id="CHEBI:456215"/>
        <dbReference type="EC" id="6.1.1.2"/>
    </reaction>
</comment>
<comment type="subunit">
    <text evidence="1">Homodimer.</text>
</comment>
<comment type="subcellular location">
    <subcellularLocation>
        <location evidence="1">Cytoplasm</location>
    </subcellularLocation>
</comment>
<comment type="similarity">
    <text evidence="1">Belongs to the class-I aminoacyl-tRNA synthetase family.</text>
</comment>
<dbReference type="EC" id="6.1.1.2" evidence="1"/>
<dbReference type="EMBL" id="AE016879">
    <property type="protein sequence ID" value="AAP25151.1"/>
    <property type="molecule type" value="Genomic_DNA"/>
</dbReference>
<dbReference type="EMBL" id="AE017334">
    <property type="protein sequence ID" value="AAT30276.1"/>
    <property type="molecule type" value="Genomic_DNA"/>
</dbReference>
<dbReference type="EMBL" id="AE017225">
    <property type="protein sequence ID" value="AAT53422.1"/>
    <property type="molecule type" value="Genomic_DNA"/>
</dbReference>
<dbReference type="RefSeq" id="NP_843665.1">
    <property type="nucleotide sequence ID" value="NC_003997.3"/>
</dbReference>
<dbReference type="RefSeq" id="WP_000110993.1">
    <property type="nucleotide sequence ID" value="NZ_WXXJ01000044.1"/>
</dbReference>
<dbReference type="RefSeq" id="YP_027371.1">
    <property type="nucleotide sequence ID" value="NC_005945.1"/>
</dbReference>
<dbReference type="SMR" id="Q81TS6"/>
<dbReference type="STRING" id="261594.GBAA_1188"/>
<dbReference type="DNASU" id="1089221"/>
<dbReference type="GeneID" id="93009852"/>
<dbReference type="KEGG" id="ban:BA_1188"/>
<dbReference type="KEGG" id="bar:GBAA_1188"/>
<dbReference type="KEGG" id="bat:BAS1099"/>
<dbReference type="PATRIC" id="fig|198094.11.peg.1167"/>
<dbReference type="eggNOG" id="COG0180">
    <property type="taxonomic scope" value="Bacteria"/>
</dbReference>
<dbReference type="HOGENOM" id="CLU_029244_1_1_9"/>
<dbReference type="OMA" id="GWGQFKP"/>
<dbReference type="OrthoDB" id="9801042at2"/>
<dbReference type="Proteomes" id="UP000000427">
    <property type="component" value="Chromosome"/>
</dbReference>
<dbReference type="Proteomes" id="UP000000594">
    <property type="component" value="Chromosome"/>
</dbReference>
<dbReference type="GO" id="GO:0005829">
    <property type="term" value="C:cytosol"/>
    <property type="evidence" value="ECO:0007669"/>
    <property type="project" value="TreeGrafter"/>
</dbReference>
<dbReference type="GO" id="GO:0005524">
    <property type="term" value="F:ATP binding"/>
    <property type="evidence" value="ECO:0007669"/>
    <property type="project" value="UniProtKB-UniRule"/>
</dbReference>
<dbReference type="GO" id="GO:0004830">
    <property type="term" value="F:tryptophan-tRNA ligase activity"/>
    <property type="evidence" value="ECO:0007669"/>
    <property type="project" value="UniProtKB-UniRule"/>
</dbReference>
<dbReference type="GO" id="GO:0006436">
    <property type="term" value="P:tryptophanyl-tRNA aminoacylation"/>
    <property type="evidence" value="ECO:0007669"/>
    <property type="project" value="UniProtKB-UniRule"/>
</dbReference>
<dbReference type="CDD" id="cd00806">
    <property type="entry name" value="TrpRS_core"/>
    <property type="match status" value="1"/>
</dbReference>
<dbReference type="FunFam" id="1.10.240.10:FF:000002">
    <property type="entry name" value="Tryptophan--tRNA ligase"/>
    <property type="match status" value="1"/>
</dbReference>
<dbReference type="Gene3D" id="3.40.50.620">
    <property type="entry name" value="HUPs"/>
    <property type="match status" value="1"/>
</dbReference>
<dbReference type="Gene3D" id="1.10.240.10">
    <property type="entry name" value="Tyrosyl-Transfer RNA Synthetase"/>
    <property type="match status" value="1"/>
</dbReference>
<dbReference type="HAMAP" id="MF_00140_B">
    <property type="entry name" value="Trp_tRNA_synth_B"/>
    <property type="match status" value="1"/>
</dbReference>
<dbReference type="InterPro" id="IPR001412">
    <property type="entry name" value="aa-tRNA-synth_I_CS"/>
</dbReference>
<dbReference type="InterPro" id="IPR002305">
    <property type="entry name" value="aa-tRNA-synth_Ic"/>
</dbReference>
<dbReference type="InterPro" id="IPR014729">
    <property type="entry name" value="Rossmann-like_a/b/a_fold"/>
</dbReference>
<dbReference type="InterPro" id="IPR002306">
    <property type="entry name" value="Trp-tRNA-ligase"/>
</dbReference>
<dbReference type="InterPro" id="IPR024109">
    <property type="entry name" value="Trp-tRNA-ligase_bac-type"/>
</dbReference>
<dbReference type="InterPro" id="IPR050203">
    <property type="entry name" value="Trp-tRNA_synthetase"/>
</dbReference>
<dbReference type="NCBIfam" id="TIGR00233">
    <property type="entry name" value="trpS"/>
    <property type="match status" value="1"/>
</dbReference>
<dbReference type="PANTHER" id="PTHR43766">
    <property type="entry name" value="TRYPTOPHAN--TRNA LIGASE, MITOCHONDRIAL"/>
    <property type="match status" value="1"/>
</dbReference>
<dbReference type="PANTHER" id="PTHR43766:SF1">
    <property type="entry name" value="TRYPTOPHAN--TRNA LIGASE, MITOCHONDRIAL"/>
    <property type="match status" value="1"/>
</dbReference>
<dbReference type="Pfam" id="PF00579">
    <property type="entry name" value="tRNA-synt_1b"/>
    <property type="match status" value="1"/>
</dbReference>
<dbReference type="PRINTS" id="PR01039">
    <property type="entry name" value="TRNASYNTHTRP"/>
</dbReference>
<dbReference type="SUPFAM" id="SSF52374">
    <property type="entry name" value="Nucleotidylyl transferase"/>
    <property type="match status" value="1"/>
</dbReference>
<dbReference type="PROSITE" id="PS00178">
    <property type="entry name" value="AA_TRNA_LIGASE_I"/>
    <property type="match status" value="1"/>
</dbReference>
<gene>
    <name evidence="1" type="primary">trpS</name>
    <name type="ordered locus">BA_1188</name>
    <name type="ordered locus">GBAA_1188</name>
    <name type="ordered locus">BAS1099</name>
</gene>
<keyword id="KW-0030">Aminoacyl-tRNA synthetase</keyword>
<keyword id="KW-0067">ATP-binding</keyword>
<keyword id="KW-0963">Cytoplasm</keyword>
<keyword id="KW-0436">Ligase</keyword>
<keyword id="KW-0547">Nucleotide-binding</keyword>
<keyword id="KW-0648">Protein biosynthesis</keyword>
<keyword id="KW-1185">Reference proteome</keyword>
<feature type="chain" id="PRO_0000136599" description="Tryptophan--tRNA ligase">
    <location>
        <begin position="1"/>
        <end position="329"/>
    </location>
</feature>
<feature type="short sequence motif" description="'HIGH' region" evidence="1">
    <location>
        <begin position="10"/>
        <end position="18"/>
    </location>
</feature>
<feature type="short sequence motif" description="'KMSKS' region" evidence="1">
    <location>
        <begin position="192"/>
        <end position="196"/>
    </location>
</feature>
<feature type="binding site" evidence="1">
    <location>
        <begin position="9"/>
        <end position="11"/>
    </location>
    <ligand>
        <name>ATP</name>
        <dbReference type="ChEBI" id="CHEBI:30616"/>
    </ligand>
</feature>
<feature type="binding site" evidence="1">
    <location>
        <begin position="17"/>
        <end position="18"/>
    </location>
    <ligand>
        <name>ATP</name>
        <dbReference type="ChEBI" id="CHEBI:30616"/>
    </ligand>
</feature>
<feature type="binding site" evidence="1">
    <location>
        <position position="132"/>
    </location>
    <ligand>
        <name>L-tryptophan</name>
        <dbReference type="ChEBI" id="CHEBI:57912"/>
    </ligand>
</feature>
<feature type="binding site" evidence="1">
    <location>
        <begin position="144"/>
        <end position="146"/>
    </location>
    <ligand>
        <name>ATP</name>
        <dbReference type="ChEBI" id="CHEBI:30616"/>
    </ligand>
</feature>
<feature type="binding site" evidence="1">
    <location>
        <position position="183"/>
    </location>
    <ligand>
        <name>ATP</name>
        <dbReference type="ChEBI" id="CHEBI:30616"/>
    </ligand>
</feature>
<feature type="binding site" evidence="1">
    <location>
        <begin position="192"/>
        <end position="196"/>
    </location>
    <ligand>
        <name>ATP</name>
        <dbReference type="ChEBI" id="CHEBI:30616"/>
    </ligand>
</feature>
<organism>
    <name type="scientific">Bacillus anthracis</name>
    <dbReference type="NCBI Taxonomy" id="1392"/>
    <lineage>
        <taxon>Bacteria</taxon>
        <taxon>Bacillati</taxon>
        <taxon>Bacillota</taxon>
        <taxon>Bacilli</taxon>
        <taxon>Bacillales</taxon>
        <taxon>Bacillaceae</taxon>
        <taxon>Bacillus</taxon>
        <taxon>Bacillus cereus group</taxon>
    </lineage>
</organism>
<accession>Q81TS6</accession>
<accession>Q6I209</accession>
<accession>Q6KVU6</accession>
<protein>
    <recommendedName>
        <fullName evidence="1">Tryptophan--tRNA ligase</fullName>
        <ecNumber evidence="1">6.1.1.2</ecNumber>
    </recommendedName>
    <alternativeName>
        <fullName evidence="1">Tryptophanyl-tRNA synthetase</fullName>
        <shortName evidence="1">TrpRS</shortName>
    </alternativeName>
</protein>
<name>SYW_BACAN</name>
<evidence type="ECO:0000255" key="1">
    <source>
        <dbReference type="HAMAP-Rule" id="MF_00140"/>
    </source>
</evidence>
<reference key="1">
    <citation type="journal article" date="2003" name="Nature">
        <title>The genome sequence of Bacillus anthracis Ames and comparison to closely related bacteria.</title>
        <authorList>
            <person name="Read T.D."/>
            <person name="Peterson S.N."/>
            <person name="Tourasse N.J."/>
            <person name="Baillie L.W."/>
            <person name="Paulsen I.T."/>
            <person name="Nelson K.E."/>
            <person name="Tettelin H."/>
            <person name="Fouts D.E."/>
            <person name="Eisen J.A."/>
            <person name="Gill S.R."/>
            <person name="Holtzapple E.K."/>
            <person name="Okstad O.A."/>
            <person name="Helgason E."/>
            <person name="Rilstone J."/>
            <person name="Wu M."/>
            <person name="Kolonay J.F."/>
            <person name="Beanan M.J."/>
            <person name="Dodson R.J."/>
            <person name="Brinkac L.M."/>
            <person name="Gwinn M.L."/>
            <person name="DeBoy R.T."/>
            <person name="Madpu R."/>
            <person name="Daugherty S.C."/>
            <person name="Durkin A.S."/>
            <person name="Haft D.H."/>
            <person name="Nelson W.C."/>
            <person name="Peterson J.D."/>
            <person name="Pop M."/>
            <person name="Khouri H.M."/>
            <person name="Radune D."/>
            <person name="Benton J.L."/>
            <person name="Mahamoud Y."/>
            <person name="Jiang L."/>
            <person name="Hance I.R."/>
            <person name="Weidman J.F."/>
            <person name="Berry K.J."/>
            <person name="Plaut R.D."/>
            <person name="Wolf A.M."/>
            <person name="Watkins K.L."/>
            <person name="Nierman W.C."/>
            <person name="Hazen A."/>
            <person name="Cline R.T."/>
            <person name="Redmond C."/>
            <person name="Thwaite J.E."/>
            <person name="White O."/>
            <person name="Salzberg S.L."/>
            <person name="Thomason B."/>
            <person name="Friedlander A.M."/>
            <person name="Koehler T.M."/>
            <person name="Hanna P.C."/>
            <person name="Kolstoe A.-B."/>
            <person name="Fraser C.M."/>
        </authorList>
    </citation>
    <scope>NUCLEOTIDE SEQUENCE [LARGE SCALE GENOMIC DNA]</scope>
    <source>
        <strain>Ames / isolate Porton</strain>
    </source>
</reference>
<reference key="2">
    <citation type="journal article" date="2009" name="J. Bacteriol.">
        <title>The complete genome sequence of Bacillus anthracis Ames 'Ancestor'.</title>
        <authorList>
            <person name="Ravel J."/>
            <person name="Jiang L."/>
            <person name="Stanley S.T."/>
            <person name="Wilson M.R."/>
            <person name="Decker R.S."/>
            <person name="Read T.D."/>
            <person name="Worsham P."/>
            <person name="Keim P.S."/>
            <person name="Salzberg S.L."/>
            <person name="Fraser-Liggett C.M."/>
            <person name="Rasko D.A."/>
        </authorList>
    </citation>
    <scope>NUCLEOTIDE SEQUENCE [LARGE SCALE GENOMIC DNA]</scope>
    <source>
        <strain>Ames ancestor</strain>
    </source>
</reference>
<reference key="3">
    <citation type="submission" date="2004-01" db="EMBL/GenBank/DDBJ databases">
        <title>Complete genome sequence of Bacillus anthracis Sterne.</title>
        <authorList>
            <person name="Brettin T.S."/>
            <person name="Bruce D."/>
            <person name="Challacombe J.F."/>
            <person name="Gilna P."/>
            <person name="Han C."/>
            <person name="Hill K."/>
            <person name="Hitchcock P."/>
            <person name="Jackson P."/>
            <person name="Keim P."/>
            <person name="Longmire J."/>
            <person name="Lucas S."/>
            <person name="Okinaka R."/>
            <person name="Richardson P."/>
            <person name="Rubin E."/>
            <person name="Tice H."/>
        </authorList>
    </citation>
    <scope>NUCLEOTIDE SEQUENCE [LARGE SCALE GENOMIC DNA]</scope>
    <source>
        <strain>Sterne</strain>
    </source>
</reference>
<proteinExistence type="inferred from homology"/>